<name>CSPA_STAA3</name>
<reference key="1">
    <citation type="journal article" date="2006" name="Lancet">
        <title>Complete genome sequence of USA300, an epidemic clone of community-acquired meticillin-resistant Staphylococcus aureus.</title>
        <authorList>
            <person name="Diep B.A."/>
            <person name="Gill S.R."/>
            <person name="Chang R.F."/>
            <person name="Phan T.H."/>
            <person name="Chen J.H."/>
            <person name="Davidson M.G."/>
            <person name="Lin F."/>
            <person name="Lin J."/>
            <person name="Carleton H.A."/>
            <person name="Mongodin E.F."/>
            <person name="Sensabaugh G.F."/>
            <person name="Perdreau-Remington F."/>
        </authorList>
    </citation>
    <scope>NUCLEOTIDE SEQUENCE [LARGE SCALE GENOMIC DNA]</scope>
    <source>
        <strain>USA300</strain>
    </source>
</reference>
<organism>
    <name type="scientific">Staphylococcus aureus (strain USA300)</name>
    <dbReference type="NCBI Taxonomy" id="367830"/>
    <lineage>
        <taxon>Bacteria</taxon>
        <taxon>Bacillati</taxon>
        <taxon>Bacillota</taxon>
        <taxon>Bacilli</taxon>
        <taxon>Bacillales</taxon>
        <taxon>Staphylococcaceae</taxon>
        <taxon>Staphylococcus</taxon>
    </lineage>
</organism>
<proteinExistence type="inferred from homology"/>
<keyword id="KW-0963">Cytoplasm</keyword>
<gene>
    <name type="primary">cspA</name>
    <name type="ordered locus">SAUSA300_1295</name>
</gene>
<feature type="chain" id="PRO_0000262538" description="Cold shock protein CspA">
    <location>
        <begin position="1"/>
        <end position="66"/>
    </location>
</feature>
<feature type="domain" description="CSD">
    <location>
        <begin position="1"/>
        <end position="66"/>
    </location>
</feature>
<dbReference type="EMBL" id="CP000255">
    <property type="protein sequence ID" value="ABD22065.1"/>
    <property type="molecule type" value="Genomic_DNA"/>
</dbReference>
<dbReference type="RefSeq" id="WP_000809131.1">
    <property type="nucleotide sequence ID" value="NZ_CP027476.1"/>
</dbReference>
<dbReference type="SMR" id="Q2FH36"/>
<dbReference type="GeneID" id="98345769"/>
<dbReference type="KEGG" id="saa:SAUSA300_1295"/>
<dbReference type="HOGENOM" id="CLU_117621_6_1_9"/>
<dbReference type="OMA" id="HYSTIKM"/>
<dbReference type="PHI-base" id="PHI:11162"/>
<dbReference type="Proteomes" id="UP000001939">
    <property type="component" value="Chromosome"/>
</dbReference>
<dbReference type="GO" id="GO:0005737">
    <property type="term" value="C:cytoplasm"/>
    <property type="evidence" value="ECO:0007669"/>
    <property type="project" value="UniProtKB-SubCell"/>
</dbReference>
<dbReference type="GO" id="GO:0003676">
    <property type="term" value="F:nucleic acid binding"/>
    <property type="evidence" value="ECO:0007669"/>
    <property type="project" value="InterPro"/>
</dbReference>
<dbReference type="CDD" id="cd04458">
    <property type="entry name" value="CSP_CDS"/>
    <property type="match status" value="1"/>
</dbReference>
<dbReference type="FunFam" id="2.40.50.140:FF:000006">
    <property type="entry name" value="Cold shock protein CspC"/>
    <property type="match status" value="1"/>
</dbReference>
<dbReference type="Gene3D" id="6.20.370.130">
    <property type="match status" value="1"/>
</dbReference>
<dbReference type="Gene3D" id="2.40.50.140">
    <property type="entry name" value="Nucleic acid-binding proteins"/>
    <property type="match status" value="1"/>
</dbReference>
<dbReference type="InterPro" id="IPR012156">
    <property type="entry name" value="Cold_shock_CspA"/>
</dbReference>
<dbReference type="InterPro" id="IPR050181">
    <property type="entry name" value="Cold_shock_domain"/>
</dbReference>
<dbReference type="InterPro" id="IPR011129">
    <property type="entry name" value="CSD"/>
</dbReference>
<dbReference type="InterPro" id="IPR019844">
    <property type="entry name" value="CSD_CS"/>
</dbReference>
<dbReference type="InterPro" id="IPR002059">
    <property type="entry name" value="CSP_DNA-bd"/>
</dbReference>
<dbReference type="InterPro" id="IPR012340">
    <property type="entry name" value="NA-bd_OB-fold"/>
</dbReference>
<dbReference type="PANTHER" id="PTHR11544">
    <property type="entry name" value="COLD SHOCK DOMAIN CONTAINING PROTEINS"/>
    <property type="match status" value="1"/>
</dbReference>
<dbReference type="Pfam" id="PF00313">
    <property type="entry name" value="CSD"/>
    <property type="match status" value="1"/>
</dbReference>
<dbReference type="PIRSF" id="PIRSF002599">
    <property type="entry name" value="Cold_shock_A"/>
    <property type="match status" value="1"/>
</dbReference>
<dbReference type="PRINTS" id="PR00050">
    <property type="entry name" value="COLDSHOCK"/>
</dbReference>
<dbReference type="SMART" id="SM00357">
    <property type="entry name" value="CSP"/>
    <property type="match status" value="1"/>
</dbReference>
<dbReference type="SUPFAM" id="SSF50249">
    <property type="entry name" value="Nucleic acid-binding proteins"/>
    <property type="match status" value="1"/>
</dbReference>
<dbReference type="PROSITE" id="PS00352">
    <property type="entry name" value="CSD_1"/>
    <property type="match status" value="1"/>
</dbReference>
<dbReference type="PROSITE" id="PS51857">
    <property type="entry name" value="CSD_2"/>
    <property type="match status" value="1"/>
</dbReference>
<evidence type="ECO:0000250" key="1"/>
<accession>Q2FH36</accession>
<protein>
    <recommendedName>
        <fullName>Cold shock protein CspA</fullName>
    </recommendedName>
</protein>
<sequence>MKQGTVKWFNAEKGFGFIEVEGENDVFVHFSAINQDGYKSLEEGQAVEFEVVEGDRGPQAANVVKL</sequence>
<comment type="function">
    <text evidence="1">Involved in cold stress response.</text>
</comment>
<comment type="subcellular location">
    <subcellularLocation>
        <location evidence="1">Cytoplasm</location>
    </subcellularLocation>
</comment>